<organism>
    <name type="scientific">Paracoccus denitrificans</name>
    <dbReference type="NCBI Taxonomy" id="266"/>
    <lineage>
        <taxon>Bacteria</taxon>
        <taxon>Pseudomonadati</taxon>
        <taxon>Pseudomonadota</taxon>
        <taxon>Alphaproteobacteria</taxon>
        <taxon>Rhodobacterales</taxon>
        <taxon>Paracoccaceae</taxon>
        <taxon>Paracoccus</taxon>
    </lineage>
</organism>
<reference key="1">
    <citation type="journal article" date="1995" name="Plasmid">
        <title>Isolation and characterization of a novel insertion sequence element, IS1248, in Paracoccus denitrificans.</title>
        <authorList>
            <person name="van Spanning R.J.M."/>
            <person name="de Boer A.P.N."/>
            <person name="Slotboom D.J."/>
            <person name="Reijnders W.N.M."/>
            <person name="Stouthamer A.H."/>
        </authorList>
    </citation>
    <scope>NUCLEOTIDE SEQUENCE [GENOMIC DNA]</scope>
</reference>
<protein>
    <recommendedName>
        <fullName>Phosphate acetyltransferase</fullName>
        <ecNumber>2.3.1.8</ecNumber>
    </recommendedName>
    <alternativeName>
        <fullName>Phosphotransacetylase</fullName>
    </alternativeName>
</protein>
<name>PTAS_PARDE</name>
<feature type="chain" id="PRO_0000179136" description="Phosphate acetyltransferase">
    <location>
        <begin position="1"/>
        <end position="318"/>
    </location>
</feature>
<gene>
    <name type="primary">pta</name>
</gene>
<sequence>MKPLDRIHEAAKALDRHIILPEGEDPRVAEAARRLLAAGLARVTLMGGPEIPGAGRIDPAGGPDLAELADHWHRMRAARGMTAERALTEMRDPIRQAAMRVRLGQADGTVGGAVATTADTVRAALQIIGKAPGAGIVSSFFLMLSCGPGAPVRGGMIFADCGLVIQPDARELAAIALSAADSCRRILAEEPRVALLSFSTAGSAEHPSLGRIREALALIRAAAPGLEVDGEMQFDAALDEAIRARKAPESPLTGRPNVFVFPDLADGNIGYKIAERLAGLTAIGPILQGLAKPANDLSRACSVKDIVNATAITAMQTK</sequence>
<comment type="catalytic activity">
    <reaction>
        <text>acetyl-CoA + phosphate = acetyl phosphate + CoA</text>
        <dbReference type="Rhea" id="RHEA:19521"/>
        <dbReference type="ChEBI" id="CHEBI:22191"/>
        <dbReference type="ChEBI" id="CHEBI:43474"/>
        <dbReference type="ChEBI" id="CHEBI:57287"/>
        <dbReference type="ChEBI" id="CHEBI:57288"/>
        <dbReference type="EC" id="2.3.1.8"/>
    </reaction>
</comment>
<comment type="pathway">
    <text>Metabolic intermediate biosynthesis; acetyl-CoA biosynthesis; acetyl-CoA from acetate: step 2/2.</text>
</comment>
<comment type="subcellular location">
    <subcellularLocation>
        <location evidence="1">Cytoplasm</location>
    </subcellularLocation>
</comment>
<comment type="similarity">
    <text evidence="1">Belongs to the phosphate acetyltransferase and butyryltransferase family.</text>
</comment>
<dbReference type="EC" id="2.3.1.8"/>
<dbReference type="EMBL" id="U08864">
    <property type="protein sequence ID" value="AAC43506.1"/>
    <property type="molecule type" value="Genomic_DNA"/>
</dbReference>
<dbReference type="SMR" id="P39197"/>
<dbReference type="BioCyc" id="MetaCyc:MONOMER-3661"/>
<dbReference type="UniPathway" id="UPA00340">
    <property type="reaction ID" value="UER00459"/>
</dbReference>
<dbReference type="GO" id="GO:0005737">
    <property type="term" value="C:cytoplasm"/>
    <property type="evidence" value="ECO:0007669"/>
    <property type="project" value="UniProtKB-SubCell"/>
</dbReference>
<dbReference type="GO" id="GO:0008959">
    <property type="term" value="F:phosphate acetyltransferase activity"/>
    <property type="evidence" value="ECO:0007669"/>
    <property type="project" value="UniProtKB-EC"/>
</dbReference>
<dbReference type="GO" id="GO:0006085">
    <property type="term" value="P:acetyl-CoA biosynthetic process"/>
    <property type="evidence" value="ECO:0007669"/>
    <property type="project" value="UniProtKB-UniPathway"/>
</dbReference>
<dbReference type="Gene3D" id="3.40.50.10950">
    <property type="match status" value="1"/>
</dbReference>
<dbReference type="Gene3D" id="3.40.50.10750">
    <property type="entry name" value="Isocitrate/Isopropylmalate dehydrogenase-like"/>
    <property type="match status" value="1"/>
</dbReference>
<dbReference type="InterPro" id="IPR012147">
    <property type="entry name" value="P_Ac_Bu_trans"/>
</dbReference>
<dbReference type="InterPro" id="IPR004614">
    <property type="entry name" value="P_AcTrfase"/>
</dbReference>
<dbReference type="InterPro" id="IPR042113">
    <property type="entry name" value="P_AcTrfase_dom1"/>
</dbReference>
<dbReference type="InterPro" id="IPR042112">
    <property type="entry name" value="P_AcTrfase_dom2"/>
</dbReference>
<dbReference type="InterPro" id="IPR050500">
    <property type="entry name" value="Phos_Acetyltrans/Butyryltrans"/>
</dbReference>
<dbReference type="InterPro" id="IPR002505">
    <property type="entry name" value="PTA_PTB"/>
</dbReference>
<dbReference type="NCBIfam" id="NF007233">
    <property type="entry name" value="PRK09653.1"/>
    <property type="match status" value="1"/>
</dbReference>
<dbReference type="NCBIfam" id="TIGR00651">
    <property type="entry name" value="pta"/>
    <property type="match status" value="1"/>
</dbReference>
<dbReference type="PANTHER" id="PTHR43356">
    <property type="entry name" value="PHOSPHATE ACETYLTRANSFERASE"/>
    <property type="match status" value="1"/>
</dbReference>
<dbReference type="PANTHER" id="PTHR43356:SF3">
    <property type="entry name" value="PHOSPHATE ACETYLTRANSFERASE"/>
    <property type="match status" value="1"/>
</dbReference>
<dbReference type="Pfam" id="PF01515">
    <property type="entry name" value="PTA_PTB"/>
    <property type="match status" value="1"/>
</dbReference>
<dbReference type="PIRSF" id="PIRSF000428">
    <property type="entry name" value="P_Ac_trans"/>
    <property type="match status" value="1"/>
</dbReference>
<dbReference type="SUPFAM" id="SSF53659">
    <property type="entry name" value="Isocitrate/Isopropylmalate dehydrogenase-like"/>
    <property type="match status" value="1"/>
</dbReference>
<keyword id="KW-0012">Acyltransferase</keyword>
<keyword id="KW-0963">Cytoplasm</keyword>
<keyword id="KW-0808">Transferase</keyword>
<accession>P39197</accession>
<evidence type="ECO:0000305" key="1"/>
<proteinExistence type="inferred from homology"/>